<sequence>MANTTSAKKATRKIARRTIINKSRRTQMRGAVRSVEDAIKKGDREAALKAMANAEPQLMRAAQRNIIHKNNASRKVSRLTHQIAKLAK</sequence>
<dbReference type="EMBL" id="CP000494">
    <property type="protein sequence ID" value="ABQ39699.1"/>
    <property type="molecule type" value="Genomic_DNA"/>
</dbReference>
<dbReference type="RefSeq" id="WP_012047584.1">
    <property type="nucleotide sequence ID" value="NC_009485.1"/>
</dbReference>
<dbReference type="SMR" id="A5EU55"/>
<dbReference type="STRING" id="288000.BBta_7874"/>
<dbReference type="KEGG" id="bbt:BBta_7874"/>
<dbReference type="eggNOG" id="COG0268">
    <property type="taxonomic scope" value="Bacteria"/>
</dbReference>
<dbReference type="HOGENOM" id="CLU_160655_3_0_5"/>
<dbReference type="OrthoDB" id="9807974at2"/>
<dbReference type="Proteomes" id="UP000000246">
    <property type="component" value="Chromosome"/>
</dbReference>
<dbReference type="GO" id="GO:0005829">
    <property type="term" value="C:cytosol"/>
    <property type="evidence" value="ECO:0007669"/>
    <property type="project" value="TreeGrafter"/>
</dbReference>
<dbReference type="GO" id="GO:0015935">
    <property type="term" value="C:small ribosomal subunit"/>
    <property type="evidence" value="ECO:0007669"/>
    <property type="project" value="TreeGrafter"/>
</dbReference>
<dbReference type="GO" id="GO:0070181">
    <property type="term" value="F:small ribosomal subunit rRNA binding"/>
    <property type="evidence" value="ECO:0007669"/>
    <property type="project" value="TreeGrafter"/>
</dbReference>
<dbReference type="GO" id="GO:0003735">
    <property type="term" value="F:structural constituent of ribosome"/>
    <property type="evidence" value="ECO:0007669"/>
    <property type="project" value="InterPro"/>
</dbReference>
<dbReference type="GO" id="GO:0006412">
    <property type="term" value="P:translation"/>
    <property type="evidence" value="ECO:0007669"/>
    <property type="project" value="UniProtKB-UniRule"/>
</dbReference>
<dbReference type="Gene3D" id="1.20.58.110">
    <property type="entry name" value="Ribosomal protein S20"/>
    <property type="match status" value="1"/>
</dbReference>
<dbReference type="HAMAP" id="MF_00500">
    <property type="entry name" value="Ribosomal_bS20"/>
    <property type="match status" value="1"/>
</dbReference>
<dbReference type="InterPro" id="IPR002583">
    <property type="entry name" value="Ribosomal_bS20"/>
</dbReference>
<dbReference type="InterPro" id="IPR036510">
    <property type="entry name" value="Ribosomal_bS20_sf"/>
</dbReference>
<dbReference type="NCBIfam" id="TIGR00029">
    <property type="entry name" value="S20"/>
    <property type="match status" value="1"/>
</dbReference>
<dbReference type="PANTHER" id="PTHR33398">
    <property type="entry name" value="30S RIBOSOMAL PROTEIN S20"/>
    <property type="match status" value="1"/>
</dbReference>
<dbReference type="PANTHER" id="PTHR33398:SF1">
    <property type="entry name" value="SMALL RIBOSOMAL SUBUNIT PROTEIN BS20C"/>
    <property type="match status" value="1"/>
</dbReference>
<dbReference type="Pfam" id="PF01649">
    <property type="entry name" value="Ribosomal_S20p"/>
    <property type="match status" value="1"/>
</dbReference>
<dbReference type="SUPFAM" id="SSF46992">
    <property type="entry name" value="Ribosomal protein S20"/>
    <property type="match status" value="1"/>
</dbReference>
<accession>A5EU55</accession>
<proteinExistence type="inferred from homology"/>
<gene>
    <name evidence="1" type="primary">rpsT</name>
    <name type="ordered locus">BBta_7874</name>
</gene>
<keyword id="KW-1185">Reference proteome</keyword>
<keyword id="KW-0687">Ribonucleoprotein</keyword>
<keyword id="KW-0689">Ribosomal protein</keyword>
<keyword id="KW-0694">RNA-binding</keyword>
<keyword id="KW-0699">rRNA-binding</keyword>
<comment type="function">
    <text evidence="1">Binds directly to 16S ribosomal RNA.</text>
</comment>
<comment type="similarity">
    <text evidence="1">Belongs to the bacterial ribosomal protein bS20 family.</text>
</comment>
<organism>
    <name type="scientific">Bradyrhizobium sp. (strain BTAi1 / ATCC BAA-1182)</name>
    <dbReference type="NCBI Taxonomy" id="288000"/>
    <lineage>
        <taxon>Bacteria</taxon>
        <taxon>Pseudomonadati</taxon>
        <taxon>Pseudomonadota</taxon>
        <taxon>Alphaproteobacteria</taxon>
        <taxon>Hyphomicrobiales</taxon>
        <taxon>Nitrobacteraceae</taxon>
        <taxon>Bradyrhizobium</taxon>
    </lineage>
</organism>
<reference key="1">
    <citation type="journal article" date="2007" name="Science">
        <title>Legumes symbioses: absence of nod genes in photosynthetic bradyrhizobia.</title>
        <authorList>
            <person name="Giraud E."/>
            <person name="Moulin L."/>
            <person name="Vallenet D."/>
            <person name="Barbe V."/>
            <person name="Cytryn E."/>
            <person name="Avarre J.-C."/>
            <person name="Jaubert M."/>
            <person name="Simon D."/>
            <person name="Cartieaux F."/>
            <person name="Prin Y."/>
            <person name="Bena G."/>
            <person name="Hannibal L."/>
            <person name="Fardoux J."/>
            <person name="Kojadinovic M."/>
            <person name="Vuillet L."/>
            <person name="Lajus A."/>
            <person name="Cruveiller S."/>
            <person name="Rouy Z."/>
            <person name="Mangenot S."/>
            <person name="Segurens B."/>
            <person name="Dossat C."/>
            <person name="Franck W.L."/>
            <person name="Chang W.-S."/>
            <person name="Saunders E."/>
            <person name="Bruce D."/>
            <person name="Richardson P."/>
            <person name="Normand P."/>
            <person name="Dreyfus B."/>
            <person name="Pignol D."/>
            <person name="Stacey G."/>
            <person name="Emerich D."/>
            <person name="Vermeglio A."/>
            <person name="Medigue C."/>
            <person name="Sadowsky M."/>
        </authorList>
    </citation>
    <scope>NUCLEOTIDE SEQUENCE [LARGE SCALE GENOMIC DNA]</scope>
    <source>
        <strain>BTAi1 / ATCC BAA-1182</strain>
    </source>
</reference>
<name>RS20_BRASB</name>
<evidence type="ECO:0000255" key="1">
    <source>
        <dbReference type="HAMAP-Rule" id="MF_00500"/>
    </source>
</evidence>
<evidence type="ECO:0000305" key="2"/>
<protein>
    <recommendedName>
        <fullName evidence="1">Small ribosomal subunit protein bS20</fullName>
    </recommendedName>
    <alternativeName>
        <fullName evidence="2">30S ribosomal protein S20</fullName>
    </alternativeName>
</protein>
<feature type="chain" id="PRO_1000014553" description="Small ribosomal subunit protein bS20">
    <location>
        <begin position="1"/>
        <end position="88"/>
    </location>
</feature>